<accession>B6EGN8</accession>
<protein>
    <recommendedName>
        <fullName evidence="1">GTP cyclohydrolase 1</fullName>
        <ecNumber evidence="1">3.5.4.16</ecNumber>
    </recommendedName>
    <alternativeName>
        <fullName evidence="1">GTP cyclohydrolase I</fullName>
        <shortName evidence="1">GTP-CH-I</shortName>
    </alternativeName>
</protein>
<comment type="catalytic activity">
    <reaction evidence="1">
        <text>GTP + H2O = 7,8-dihydroneopterin 3'-triphosphate + formate + H(+)</text>
        <dbReference type="Rhea" id="RHEA:17473"/>
        <dbReference type="ChEBI" id="CHEBI:15377"/>
        <dbReference type="ChEBI" id="CHEBI:15378"/>
        <dbReference type="ChEBI" id="CHEBI:15740"/>
        <dbReference type="ChEBI" id="CHEBI:37565"/>
        <dbReference type="ChEBI" id="CHEBI:58462"/>
        <dbReference type="EC" id="3.5.4.16"/>
    </reaction>
</comment>
<comment type="pathway">
    <text evidence="1">Cofactor biosynthesis; 7,8-dihydroneopterin triphosphate biosynthesis; 7,8-dihydroneopterin triphosphate from GTP: step 1/1.</text>
</comment>
<comment type="subunit">
    <text evidence="1">Homomer.</text>
</comment>
<comment type="similarity">
    <text evidence="1">Belongs to the GTP cyclohydrolase I family.</text>
</comment>
<evidence type="ECO:0000255" key="1">
    <source>
        <dbReference type="HAMAP-Rule" id="MF_00223"/>
    </source>
</evidence>
<organism>
    <name type="scientific">Aliivibrio salmonicida (strain LFI1238)</name>
    <name type="common">Vibrio salmonicida (strain LFI1238)</name>
    <dbReference type="NCBI Taxonomy" id="316275"/>
    <lineage>
        <taxon>Bacteria</taxon>
        <taxon>Pseudomonadati</taxon>
        <taxon>Pseudomonadota</taxon>
        <taxon>Gammaproteobacteria</taxon>
        <taxon>Vibrionales</taxon>
        <taxon>Vibrionaceae</taxon>
        <taxon>Aliivibrio</taxon>
    </lineage>
</organism>
<sequence length="217" mass="24475">MSSFSESAILVRDALVARGLETPMKENGISREEKKERIEEHMREILSLLTLDLSDDSLEETPHRIAKMYVDEIFSGLDYANFPKITVIENKMNCDEMVRVNDITLTSTCEHHLVTIDGKATVAYIPREKIIGLSKINRIVRFFAQRPQVQERMTQQILVALQTLLGSDDVAITMEATHYCVKSRGVMDATSSTTTTALGGIFKRNPATRHEFLSGIR</sequence>
<dbReference type="EC" id="3.5.4.16" evidence="1"/>
<dbReference type="EMBL" id="FM178379">
    <property type="protein sequence ID" value="CAQ79618.1"/>
    <property type="molecule type" value="Genomic_DNA"/>
</dbReference>
<dbReference type="RefSeq" id="WP_012550500.1">
    <property type="nucleotide sequence ID" value="NC_011312.1"/>
</dbReference>
<dbReference type="SMR" id="B6EGN8"/>
<dbReference type="KEGG" id="vsa:VSAL_I1933"/>
<dbReference type="eggNOG" id="COG0302">
    <property type="taxonomic scope" value="Bacteria"/>
</dbReference>
<dbReference type="HOGENOM" id="CLU_049768_3_2_6"/>
<dbReference type="UniPathway" id="UPA00848">
    <property type="reaction ID" value="UER00151"/>
</dbReference>
<dbReference type="Proteomes" id="UP000001730">
    <property type="component" value="Chromosome 1"/>
</dbReference>
<dbReference type="GO" id="GO:0005737">
    <property type="term" value="C:cytoplasm"/>
    <property type="evidence" value="ECO:0007669"/>
    <property type="project" value="TreeGrafter"/>
</dbReference>
<dbReference type="GO" id="GO:0005525">
    <property type="term" value="F:GTP binding"/>
    <property type="evidence" value="ECO:0007669"/>
    <property type="project" value="UniProtKB-KW"/>
</dbReference>
<dbReference type="GO" id="GO:0003934">
    <property type="term" value="F:GTP cyclohydrolase I activity"/>
    <property type="evidence" value="ECO:0007669"/>
    <property type="project" value="UniProtKB-UniRule"/>
</dbReference>
<dbReference type="GO" id="GO:0008270">
    <property type="term" value="F:zinc ion binding"/>
    <property type="evidence" value="ECO:0007669"/>
    <property type="project" value="UniProtKB-UniRule"/>
</dbReference>
<dbReference type="GO" id="GO:0006730">
    <property type="term" value="P:one-carbon metabolic process"/>
    <property type="evidence" value="ECO:0007669"/>
    <property type="project" value="UniProtKB-UniRule"/>
</dbReference>
<dbReference type="GO" id="GO:0006729">
    <property type="term" value="P:tetrahydrobiopterin biosynthetic process"/>
    <property type="evidence" value="ECO:0007669"/>
    <property type="project" value="TreeGrafter"/>
</dbReference>
<dbReference type="GO" id="GO:0046654">
    <property type="term" value="P:tetrahydrofolate biosynthetic process"/>
    <property type="evidence" value="ECO:0007669"/>
    <property type="project" value="UniProtKB-UniRule"/>
</dbReference>
<dbReference type="FunFam" id="1.10.286.10:FF:000002">
    <property type="entry name" value="GTP cyclohydrolase 1"/>
    <property type="match status" value="1"/>
</dbReference>
<dbReference type="FunFam" id="3.30.1130.10:FF:000001">
    <property type="entry name" value="GTP cyclohydrolase 1"/>
    <property type="match status" value="1"/>
</dbReference>
<dbReference type="Gene3D" id="1.10.286.10">
    <property type="match status" value="1"/>
</dbReference>
<dbReference type="Gene3D" id="3.30.1130.10">
    <property type="match status" value="1"/>
</dbReference>
<dbReference type="HAMAP" id="MF_00223">
    <property type="entry name" value="FolE"/>
    <property type="match status" value="1"/>
</dbReference>
<dbReference type="InterPro" id="IPR043133">
    <property type="entry name" value="GTP-CH-I_C/QueF"/>
</dbReference>
<dbReference type="InterPro" id="IPR043134">
    <property type="entry name" value="GTP-CH-I_N"/>
</dbReference>
<dbReference type="InterPro" id="IPR001474">
    <property type="entry name" value="GTP_CycHdrlase_I"/>
</dbReference>
<dbReference type="InterPro" id="IPR018234">
    <property type="entry name" value="GTP_CycHdrlase_I_CS"/>
</dbReference>
<dbReference type="InterPro" id="IPR020602">
    <property type="entry name" value="GTP_CycHdrlase_I_dom"/>
</dbReference>
<dbReference type="NCBIfam" id="TIGR00063">
    <property type="entry name" value="folE"/>
    <property type="match status" value="1"/>
</dbReference>
<dbReference type="NCBIfam" id="NF006824">
    <property type="entry name" value="PRK09347.1-1"/>
    <property type="match status" value="1"/>
</dbReference>
<dbReference type="NCBIfam" id="NF006825">
    <property type="entry name" value="PRK09347.1-2"/>
    <property type="match status" value="1"/>
</dbReference>
<dbReference type="NCBIfam" id="NF006826">
    <property type="entry name" value="PRK09347.1-3"/>
    <property type="match status" value="1"/>
</dbReference>
<dbReference type="PANTHER" id="PTHR11109:SF7">
    <property type="entry name" value="GTP CYCLOHYDROLASE 1"/>
    <property type="match status" value="1"/>
</dbReference>
<dbReference type="PANTHER" id="PTHR11109">
    <property type="entry name" value="GTP CYCLOHYDROLASE I"/>
    <property type="match status" value="1"/>
</dbReference>
<dbReference type="Pfam" id="PF01227">
    <property type="entry name" value="GTP_cyclohydroI"/>
    <property type="match status" value="1"/>
</dbReference>
<dbReference type="SUPFAM" id="SSF55620">
    <property type="entry name" value="Tetrahydrobiopterin biosynthesis enzymes-like"/>
    <property type="match status" value="1"/>
</dbReference>
<dbReference type="PROSITE" id="PS00859">
    <property type="entry name" value="GTP_CYCLOHYDROL_1_1"/>
    <property type="match status" value="1"/>
</dbReference>
<dbReference type="PROSITE" id="PS00860">
    <property type="entry name" value="GTP_CYCLOHYDROL_1_2"/>
    <property type="match status" value="1"/>
</dbReference>
<reference key="1">
    <citation type="journal article" date="2008" name="BMC Genomics">
        <title>The genome sequence of the fish pathogen Aliivibrio salmonicida strain LFI1238 shows extensive evidence of gene decay.</title>
        <authorList>
            <person name="Hjerde E."/>
            <person name="Lorentzen M.S."/>
            <person name="Holden M.T."/>
            <person name="Seeger K."/>
            <person name="Paulsen S."/>
            <person name="Bason N."/>
            <person name="Churcher C."/>
            <person name="Harris D."/>
            <person name="Norbertczak H."/>
            <person name="Quail M.A."/>
            <person name="Sanders S."/>
            <person name="Thurston S."/>
            <person name="Parkhill J."/>
            <person name="Willassen N.P."/>
            <person name="Thomson N.R."/>
        </authorList>
    </citation>
    <scope>NUCLEOTIDE SEQUENCE [LARGE SCALE GENOMIC DNA]</scope>
    <source>
        <strain>LFI1238</strain>
    </source>
</reference>
<gene>
    <name evidence="1" type="primary">folE</name>
    <name type="ordered locus">VSAL_I1933</name>
</gene>
<keyword id="KW-0342">GTP-binding</keyword>
<keyword id="KW-0378">Hydrolase</keyword>
<keyword id="KW-0479">Metal-binding</keyword>
<keyword id="KW-0547">Nucleotide-binding</keyword>
<keyword id="KW-0554">One-carbon metabolism</keyword>
<keyword id="KW-0862">Zinc</keyword>
<name>GCH1_ALISL</name>
<proteinExistence type="inferred from homology"/>
<feature type="chain" id="PRO_1000100160" description="GTP cyclohydrolase 1">
    <location>
        <begin position="1"/>
        <end position="217"/>
    </location>
</feature>
<feature type="binding site" evidence="1">
    <location>
        <position position="109"/>
    </location>
    <ligand>
        <name>Zn(2+)</name>
        <dbReference type="ChEBI" id="CHEBI:29105"/>
    </ligand>
</feature>
<feature type="binding site" evidence="1">
    <location>
        <position position="112"/>
    </location>
    <ligand>
        <name>Zn(2+)</name>
        <dbReference type="ChEBI" id="CHEBI:29105"/>
    </ligand>
</feature>
<feature type="binding site" evidence="1">
    <location>
        <position position="180"/>
    </location>
    <ligand>
        <name>Zn(2+)</name>
        <dbReference type="ChEBI" id="CHEBI:29105"/>
    </ligand>
</feature>